<feature type="signal peptide" evidence="1">
    <location>
        <begin position="1"/>
        <end position="36"/>
    </location>
</feature>
<feature type="chain" id="PRO_0000359544" description="Serine protease SplB">
    <location>
        <begin position="37"/>
        <end position="240"/>
    </location>
</feature>
<feature type="active site" description="Charge relay system" evidence="2">
    <location>
        <position position="75"/>
    </location>
</feature>
<feature type="active site" description="Charge relay system" evidence="2">
    <location>
        <position position="113"/>
    </location>
</feature>
<feature type="active site" description="Charge relay system" evidence="2">
    <location>
        <position position="193"/>
    </location>
</feature>
<reference key="1">
    <citation type="journal article" date="2001" name="Lancet">
        <title>Whole genome sequencing of meticillin-resistant Staphylococcus aureus.</title>
        <authorList>
            <person name="Kuroda M."/>
            <person name="Ohta T."/>
            <person name="Uchiyama I."/>
            <person name="Baba T."/>
            <person name="Yuzawa H."/>
            <person name="Kobayashi I."/>
            <person name="Cui L."/>
            <person name="Oguchi A."/>
            <person name="Aoki K."/>
            <person name="Nagai Y."/>
            <person name="Lian J.-Q."/>
            <person name="Ito T."/>
            <person name="Kanamori M."/>
            <person name="Matsumaru H."/>
            <person name="Maruyama A."/>
            <person name="Murakami H."/>
            <person name="Hosoyama A."/>
            <person name="Mizutani-Ui Y."/>
            <person name="Takahashi N.K."/>
            <person name="Sawano T."/>
            <person name="Inoue R."/>
            <person name="Kaito C."/>
            <person name="Sekimizu K."/>
            <person name="Hirakawa H."/>
            <person name="Kuhara S."/>
            <person name="Goto S."/>
            <person name="Yabuzaki J."/>
            <person name="Kanehisa M."/>
            <person name="Yamashita A."/>
            <person name="Oshima K."/>
            <person name="Furuya K."/>
            <person name="Yoshino C."/>
            <person name="Shiba T."/>
            <person name="Hattori M."/>
            <person name="Ogasawara N."/>
            <person name="Hayashi H."/>
            <person name="Hiramatsu K."/>
        </authorList>
    </citation>
    <scope>NUCLEOTIDE SEQUENCE [LARGE SCALE GENOMIC DNA]</scope>
    <source>
        <strain>Mu50 / ATCC 700699</strain>
    </source>
</reference>
<sequence>MNKNVVIKSLATLTILTSVTGIGTTLVEEVQQTAKAENNVTKIQDTNIFPYTGVVAFKSATGFVVGKNTILTNKHVSKNYKVGDRITAHPNSDKGNGGIYSIKKIINYPGKEDVSVIQVEERAIERGPKGFNFNDNVTPFKYAAGAKAGERIKVIGYPHPYKNKYVLYESTGPVMSVEGSSIVYSAHTESGNSGSPVLNSNNELVGIHFASDVKNDDNRNAYGVYFTPEIKKFIAENIDK</sequence>
<name>SPLB_STAAM</name>
<gene>
    <name type="primary">splB</name>
    <name type="ordered locus">SAV1812</name>
</gene>
<protein>
    <recommendedName>
        <fullName>Serine protease SplB</fullName>
        <ecNumber>3.4.21.-</ecNumber>
    </recommendedName>
</protein>
<keyword id="KW-0378">Hydrolase</keyword>
<keyword id="KW-0645">Protease</keyword>
<keyword id="KW-0964">Secreted</keyword>
<keyword id="KW-0720">Serine protease</keyword>
<keyword id="KW-0732">Signal</keyword>
<accession>Q7A2Q7</accession>
<dbReference type="EC" id="3.4.21.-"/>
<dbReference type="EMBL" id="BA000017">
    <property type="protein sequence ID" value="BAB57974.1"/>
    <property type="molecule type" value="Genomic_DNA"/>
</dbReference>
<dbReference type="RefSeq" id="WP_001039454.1">
    <property type="nucleotide sequence ID" value="NC_002758.2"/>
</dbReference>
<dbReference type="SMR" id="Q7A2Q7"/>
<dbReference type="MEROPS" id="S01.282"/>
<dbReference type="DNASU" id="1121786"/>
<dbReference type="KEGG" id="sav:SAV1812"/>
<dbReference type="HOGENOM" id="CLU_073589_2_0_9"/>
<dbReference type="PhylomeDB" id="Q7A2Q7"/>
<dbReference type="Proteomes" id="UP000002481">
    <property type="component" value="Chromosome"/>
</dbReference>
<dbReference type="GO" id="GO:0005576">
    <property type="term" value="C:extracellular region"/>
    <property type="evidence" value="ECO:0007669"/>
    <property type="project" value="UniProtKB-SubCell"/>
</dbReference>
<dbReference type="GO" id="GO:0004252">
    <property type="term" value="F:serine-type endopeptidase activity"/>
    <property type="evidence" value="ECO:0007669"/>
    <property type="project" value="InterPro"/>
</dbReference>
<dbReference type="GO" id="GO:0006508">
    <property type="term" value="P:proteolysis"/>
    <property type="evidence" value="ECO:0007669"/>
    <property type="project" value="UniProtKB-KW"/>
</dbReference>
<dbReference type="Gene3D" id="2.40.10.10">
    <property type="entry name" value="Trypsin-like serine proteases"/>
    <property type="match status" value="2"/>
</dbReference>
<dbReference type="InterPro" id="IPR009003">
    <property type="entry name" value="Peptidase_S1_PA"/>
</dbReference>
<dbReference type="InterPro" id="IPR043504">
    <property type="entry name" value="Peptidase_S1_PA_chymotrypsin"/>
</dbReference>
<dbReference type="InterPro" id="IPR008256">
    <property type="entry name" value="Peptidase_S1B"/>
</dbReference>
<dbReference type="InterPro" id="IPR008353">
    <property type="entry name" value="Peptidase_S1B_tx"/>
</dbReference>
<dbReference type="InterPro" id="IPR001254">
    <property type="entry name" value="Trypsin_dom"/>
</dbReference>
<dbReference type="InterPro" id="IPR028301">
    <property type="entry name" value="V8_his_AS"/>
</dbReference>
<dbReference type="PANTHER" id="PTHR43019:SF23">
    <property type="entry name" value="PROTEASE DO-LIKE 5, CHLOROPLASTIC"/>
    <property type="match status" value="1"/>
</dbReference>
<dbReference type="PANTHER" id="PTHR43019">
    <property type="entry name" value="SERINE ENDOPROTEASE DEGS"/>
    <property type="match status" value="1"/>
</dbReference>
<dbReference type="Pfam" id="PF00089">
    <property type="entry name" value="Trypsin"/>
    <property type="match status" value="1"/>
</dbReference>
<dbReference type="PRINTS" id="PR01774">
    <property type="entry name" value="EXFOLTOXIN"/>
</dbReference>
<dbReference type="PRINTS" id="PR00839">
    <property type="entry name" value="V8PROTEASE"/>
</dbReference>
<dbReference type="SUPFAM" id="SSF50494">
    <property type="entry name" value="Trypsin-like serine proteases"/>
    <property type="match status" value="1"/>
</dbReference>
<dbReference type="PROSITE" id="PS00672">
    <property type="entry name" value="V8_HIS"/>
    <property type="match status" value="1"/>
</dbReference>
<comment type="function">
    <text evidence="1">Serine protease that cleaves specifically after the sequence Trp-Glu-Leu-Gln.</text>
</comment>
<comment type="subcellular location">
    <subcellularLocation>
        <location evidence="1">Secreted</location>
    </subcellularLocation>
</comment>
<comment type="similarity">
    <text evidence="3">Belongs to the peptidase S1B family.</text>
</comment>
<evidence type="ECO:0000250" key="1"/>
<evidence type="ECO:0000250" key="2">
    <source>
        <dbReference type="UniProtKB" id="Q2FXC3"/>
    </source>
</evidence>
<evidence type="ECO:0000305" key="3"/>
<organism>
    <name type="scientific">Staphylococcus aureus (strain Mu50 / ATCC 700699)</name>
    <dbReference type="NCBI Taxonomy" id="158878"/>
    <lineage>
        <taxon>Bacteria</taxon>
        <taxon>Bacillati</taxon>
        <taxon>Bacillota</taxon>
        <taxon>Bacilli</taxon>
        <taxon>Bacillales</taxon>
        <taxon>Staphylococcaceae</taxon>
        <taxon>Staphylococcus</taxon>
    </lineage>
</organism>
<proteinExistence type="inferred from homology"/>